<protein>
    <recommendedName>
        <fullName evidence="1">Protein NrdI</fullName>
    </recommendedName>
</protein>
<name>NRDI_STAAC</name>
<evidence type="ECO:0000255" key="1">
    <source>
        <dbReference type="HAMAP-Rule" id="MF_00128"/>
    </source>
</evidence>
<reference key="1">
    <citation type="journal article" date="2005" name="J. Bacteriol.">
        <title>Insights on evolution of virulence and resistance from the complete genome analysis of an early methicillin-resistant Staphylococcus aureus strain and a biofilm-producing methicillin-resistant Staphylococcus epidermidis strain.</title>
        <authorList>
            <person name="Gill S.R."/>
            <person name="Fouts D.E."/>
            <person name="Archer G.L."/>
            <person name="Mongodin E.F."/>
            <person name="DeBoy R.T."/>
            <person name="Ravel J."/>
            <person name="Paulsen I.T."/>
            <person name="Kolonay J.F."/>
            <person name="Brinkac L.M."/>
            <person name="Beanan M.J."/>
            <person name="Dodson R.J."/>
            <person name="Daugherty S.C."/>
            <person name="Madupu R."/>
            <person name="Angiuoli S.V."/>
            <person name="Durkin A.S."/>
            <person name="Haft D.H."/>
            <person name="Vamathevan J.J."/>
            <person name="Khouri H."/>
            <person name="Utterback T.R."/>
            <person name="Lee C."/>
            <person name="Dimitrov G."/>
            <person name="Jiang L."/>
            <person name="Qin H."/>
            <person name="Weidman J."/>
            <person name="Tran K."/>
            <person name="Kang K.H."/>
            <person name="Hance I.R."/>
            <person name="Nelson K.E."/>
            <person name="Fraser C.M."/>
        </authorList>
    </citation>
    <scope>NUCLEOTIDE SEQUENCE [LARGE SCALE GENOMIC DNA]</scope>
    <source>
        <strain>COL</strain>
    </source>
</reference>
<comment type="function">
    <text evidence="1">Probably involved in ribonucleotide reductase function.</text>
</comment>
<comment type="similarity">
    <text evidence="1">Belongs to the NrdI family.</text>
</comment>
<organism>
    <name type="scientific">Staphylococcus aureus (strain COL)</name>
    <dbReference type="NCBI Taxonomy" id="93062"/>
    <lineage>
        <taxon>Bacteria</taxon>
        <taxon>Bacillati</taxon>
        <taxon>Bacillota</taxon>
        <taxon>Bacilli</taxon>
        <taxon>Bacillales</taxon>
        <taxon>Staphylococcaceae</taxon>
        <taxon>Staphylococcus</taxon>
    </lineage>
</organism>
<proteinExistence type="inferred from homology"/>
<feature type="chain" id="PRO_0000164334" description="Protein NrdI">
    <location>
        <begin position="1"/>
        <end position="132"/>
    </location>
</feature>
<sequence length="132" mass="15166">MKIIYFSFTGNVRRFIKRTELENTLEITAENCMEPVHEPFIIVTGTIGFGEVPEPVQSFLEVNHQYIRGVAASGNRNWGLNFAKAGRTISEEYNVPLLMKFELHGKNKDVIEFKNKVGNFNENHGREKVQSY</sequence>
<accession>Q5HHU1</accession>
<dbReference type="EMBL" id="CP000046">
    <property type="protein sequence ID" value="AAW37847.1"/>
    <property type="molecule type" value="Genomic_DNA"/>
</dbReference>
<dbReference type="RefSeq" id="WP_000692521.1">
    <property type="nucleotide sequence ID" value="NZ_JBGOFO010000005.1"/>
</dbReference>
<dbReference type="SMR" id="Q5HHU1"/>
<dbReference type="KEGG" id="sac:SACOL0791"/>
<dbReference type="HOGENOM" id="CLU_114845_3_0_9"/>
<dbReference type="Proteomes" id="UP000000530">
    <property type="component" value="Chromosome"/>
</dbReference>
<dbReference type="GO" id="GO:0010181">
    <property type="term" value="F:FMN binding"/>
    <property type="evidence" value="ECO:0007669"/>
    <property type="project" value="InterPro"/>
</dbReference>
<dbReference type="GO" id="GO:0036211">
    <property type="term" value="P:protein modification process"/>
    <property type="evidence" value="ECO:0007669"/>
    <property type="project" value="InterPro"/>
</dbReference>
<dbReference type="Gene3D" id="3.40.50.360">
    <property type="match status" value="1"/>
</dbReference>
<dbReference type="HAMAP" id="MF_00128">
    <property type="entry name" value="NrdI"/>
    <property type="match status" value="1"/>
</dbReference>
<dbReference type="InterPro" id="IPR029039">
    <property type="entry name" value="Flavoprotein-like_sf"/>
</dbReference>
<dbReference type="InterPro" id="IPR020852">
    <property type="entry name" value="RNR_Ib_NrdI_bac"/>
</dbReference>
<dbReference type="InterPro" id="IPR004465">
    <property type="entry name" value="RNR_NrdI"/>
</dbReference>
<dbReference type="NCBIfam" id="TIGR00333">
    <property type="entry name" value="nrdI"/>
    <property type="match status" value="1"/>
</dbReference>
<dbReference type="PANTHER" id="PTHR37297">
    <property type="entry name" value="PROTEIN NRDI"/>
    <property type="match status" value="1"/>
</dbReference>
<dbReference type="PANTHER" id="PTHR37297:SF1">
    <property type="entry name" value="PROTEIN NRDI"/>
    <property type="match status" value="1"/>
</dbReference>
<dbReference type="Pfam" id="PF07972">
    <property type="entry name" value="Flavodoxin_NdrI"/>
    <property type="match status" value="1"/>
</dbReference>
<dbReference type="PIRSF" id="PIRSF005087">
    <property type="entry name" value="NrdI"/>
    <property type="match status" value="1"/>
</dbReference>
<dbReference type="SUPFAM" id="SSF52218">
    <property type="entry name" value="Flavoproteins"/>
    <property type="match status" value="1"/>
</dbReference>
<gene>
    <name evidence="1" type="primary">nrdI</name>
    <name type="ordered locus">SACOL0791</name>
</gene>